<feature type="initiator methionine" description="Removed">
    <location>
        <position position="1"/>
    </location>
</feature>
<feature type="chain" id="PRO_0000422321" description="NAD(P)H dehydrogenase (quinone)">
    <location>
        <begin position="2"/>
        <end position="200"/>
    </location>
</feature>
<feature type="domain" description="Flavodoxin-like">
    <location>
        <begin position="7"/>
        <end position="199"/>
    </location>
</feature>
<feature type="binding site" evidence="2">
    <location>
        <begin position="13"/>
        <end position="18"/>
    </location>
    <ligand>
        <name>FMN</name>
        <dbReference type="ChEBI" id="CHEBI:58210"/>
    </ligand>
</feature>
<feature type="binding site" evidence="2">
    <location>
        <begin position="86"/>
        <end position="88"/>
    </location>
    <ligand>
        <name>FMN</name>
        <dbReference type="ChEBI" id="CHEBI:58210"/>
    </ligand>
</feature>
<feature type="binding site" evidence="2">
    <location>
        <begin position="121"/>
        <end position="127"/>
    </location>
    <ligand>
        <name>FMN</name>
        <dbReference type="ChEBI" id="CHEBI:58210"/>
    </ligand>
</feature>
<feature type="binding site" evidence="2">
    <location>
        <position position="142"/>
    </location>
    <ligand>
        <name>FMN</name>
        <dbReference type="ChEBI" id="CHEBI:58210"/>
    </ligand>
</feature>
<feature type="strand" evidence="6">
    <location>
        <begin position="6"/>
        <end position="11"/>
    </location>
</feature>
<feature type="strand" evidence="6">
    <location>
        <begin position="14"/>
        <end position="16"/>
    </location>
</feature>
<feature type="helix" evidence="6">
    <location>
        <begin position="17"/>
        <end position="31"/>
    </location>
</feature>
<feature type="strand" evidence="6">
    <location>
        <begin position="35"/>
        <end position="40"/>
    </location>
</feature>
<feature type="helix" evidence="6">
    <location>
        <begin position="47"/>
        <end position="50"/>
    </location>
</feature>
<feature type="helix" evidence="6">
    <location>
        <begin position="54"/>
        <end position="62"/>
    </location>
</feature>
<feature type="turn" evidence="6">
    <location>
        <begin position="63"/>
        <end position="65"/>
    </location>
</feature>
<feature type="helix" evidence="6">
    <location>
        <begin position="71"/>
        <end position="76"/>
    </location>
</feature>
<feature type="strand" evidence="6">
    <location>
        <begin position="78"/>
        <end position="87"/>
    </location>
</feature>
<feature type="helix" evidence="6">
    <location>
        <begin position="93"/>
        <end position="100"/>
    </location>
</feature>
<feature type="helix" evidence="6">
    <location>
        <begin position="103"/>
        <end position="107"/>
    </location>
</feature>
<feature type="turn" evidence="6">
    <location>
        <begin position="108"/>
        <end position="113"/>
    </location>
</feature>
<feature type="strand" evidence="6">
    <location>
        <begin position="115"/>
        <end position="124"/>
    </location>
</feature>
<feature type="helix" evidence="6">
    <location>
        <begin position="131"/>
        <end position="141"/>
    </location>
</feature>
<feature type="turn" evidence="6">
    <location>
        <begin position="142"/>
        <end position="144"/>
    </location>
</feature>
<feature type="helix" evidence="6">
    <location>
        <begin position="155"/>
        <end position="159"/>
    </location>
</feature>
<feature type="strand" evidence="6">
    <location>
        <begin position="164"/>
        <end position="166"/>
    </location>
</feature>
<feature type="strand" evidence="6">
    <location>
        <begin position="168"/>
        <end position="170"/>
    </location>
</feature>
<feature type="helix" evidence="6">
    <location>
        <begin position="178"/>
        <end position="199"/>
    </location>
</feature>
<dbReference type="EC" id="1.6.5.2" evidence="1"/>
<dbReference type="EMBL" id="AE001825">
    <property type="protein sequence ID" value="AAF12417.1"/>
    <property type="molecule type" value="Genomic_DNA"/>
</dbReference>
<dbReference type="PIR" id="G75573">
    <property type="entry name" value="G75573"/>
</dbReference>
<dbReference type="RefSeq" id="NP_285537.1">
    <property type="nucleotide sequence ID" value="NC_001264.1"/>
</dbReference>
<dbReference type="RefSeq" id="WP_010889473.1">
    <property type="nucleotide sequence ID" value="NC_001264.1"/>
</dbReference>
<dbReference type="PDB" id="1YDG">
    <property type="method" value="X-ray"/>
    <property type="resolution" value="2.00 A"/>
    <property type="chains" value="A/B/C/D/E/F/G/H=2-199"/>
</dbReference>
<dbReference type="PDB" id="1YRH">
    <property type="method" value="X-ray"/>
    <property type="resolution" value="3.11 A"/>
    <property type="chains" value="A/B/C/D/E/F/G/H=2-199"/>
</dbReference>
<dbReference type="PDBsum" id="1YDG"/>
<dbReference type="PDBsum" id="1YRH"/>
<dbReference type="SMR" id="Q9RYU4"/>
<dbReference type="FunCoup" id="Q9RYU4">
    <property type="interactions" value="145"/>
</dbReference>
<dbReference type="STRING" id="243230.DR_A0214"/>
<dbReference type="DrugBank" id="DB03247">
    <property type="generic name" value="Flavin mononucleotide"/>
</dbReference>
<dbReference type="PaxDb" id="243230-DR_A0214"/>
<dbReference type="EnsemblBacteria" id="AAF12417">
    <property type="protein sequence ID" value="AAF12417"/>
    <property type="gene ID" value="DR_A0214"/>
</dbReference>
<dbReference type="GeneID" id="69519108"/>
<dbReference type="KEGG" id="dra:DR_A0214"/>
<dbReference type="PATRIC" id="fig|243230.17.peg.3103"/>
<dbReference type="eggNOG" id="COG0655">
    <property type="taxonomic scope" value="Bacteria"/>
</dbReference>
<dbReference type="HOGENOM" id="CLU_051402_0_2_0"/>
<dbReference type="InParanoid" id="Q9RYU4"/>
<dbReference type="OrthoDB" id="9801479at2"/>
<dbReference type="EvolutionaryTrace" id="Q9RYU4"/>
<dbReference type="Proteomes" id="UP000002524">
    <property type="component" value="Chromosome 2"/>
</dbReference>
<dbReference type="GO" id="GO:0016020">
    <property type="term" value="C:membrane"/>
    <property type="evidence" value="ECO:0000318"/>
    <property type="project" value="GO_Central"/>
</dbReference>
<dbReference type="GO" id="GO:0010181">
    <property type="term" value="F:FMN binding"/>
    <property type="evidence" value="ECO:0007669"/>
    <property type="project" value="InterPro"/>
</dbReference>
<dbReference type="GO" id="GO:0003955">
    <property type="term" value="F:NAD(P)H dehydrogenase (quinone) activity"/>
    <property type="evidence" value="ECO:0000318"/>
    <property type="project" value="GO_Central"/>
</dbReference>
<dbReference type="GO" id="GO:0050136">
    <property type="term" value="F:NADH:ubiquinone reductase (non-electrogenic) activity"/>
    <property type="evidence" value="ECO:0007669"/>
    <property type="project" value="RHEA"/>
</dbReference>
<dbReference type="GO" id="GO:0008753">
    <property type="term" value="F:NADPH dehydrogenase (quinone) activity"/>
    <property type="evidence" value="ECO:0007669"/>
    <property type="project" value="RHEA"/>
</dbReference>
<dbReference type="FunFam" id="3.40.50.360:FF:000001">
    <property type="entry name" value="NAD(P)H dehydrogenase (Quinone) FQR1-like"/>
    <property type="match status" value="1"/>
</dbReference>
<dbReference type="Gene3D" id="3.40.50.360">
    <property type="match status" value="1"/>
</dbReference>
<dbReference type="InterPro" id="IPR008254">
    <property type="entry name" value="Flavodoxin/NO_synth"/>
</dbReference>
<dbReference type="InterPro" id="IPR029039">
    <property type="entry name" value="Flavoprotein-like_sf"/>
</dbReference>
<dbReference type="InterPro" id="IPR010089">
    <property type="entry name" value="Flavoprotein_WrbA-like"/>
</dbReference>
<dbReference type="NCBIfam" id="TIGR01755">
    <property type="entry name" value="flav_wrbA"/>
    <property type="match status" value="1"/>
</dbReference>
<dbReference type="PANTHER" id="PTHR30546">
    <property type="entry name" value="FLAVODOXIN-RELATED PROTEIN WRBA-RELATED"/>
    <property type="match status" value="1"/>
</dbReference>
<dbReference type="PANTHER" id="PTHR30546:SF23">
    <property type="entry name" value="FLAVOPROTEIN-LIKE PROTEIN YCP4-RELATED"/>
    <property type="match status" value="1"/>
</dbReference>
<dbReference type="Pfam" id="PF00258">
    <property type="entry name" value="Flavodoxin_1"/>
    <property type="match status" value="1"/>
</dbReference>
<dbReference type="SUPFAM" id="SSF52218">
    <property type="entry name" value="Flavoproteins"/>
    <property type="match status" value="1"/>
</dbReference>
<dbReference type="PROSITE" id="PS50902">
    <property type="entry name" value="FLAVODOXIN_LIKE"/>
    <property type="match status" value="1"/>
</dbReference>
<keyword id="KW-0002">3D-structure</keyword>
<keyword id="KW-0285">Flavoprotein</keyword>
<keyword id="KW-0288">FMN</keyword>
<keyword id="KW-0520">NAD</keyword>
<keyword id="KW-0521">NADP</keyword>
<keyword id="KW-0547">Nucleotide-binding</keyword>
<keyword id="KW-0560">Oxidoreductase</keyword>
<keyword id="KW-1185">Reference proteome</keyword>
<gene>
    <name type="ordered locus">DR_A0214</name>
</gene>
<proteinExistence type="evidence at protein level"/>
<comment type="catalytic activity">
    <reaction evidence="1">
        <text>a quinone + NADH + H(+) = a quinol + NAD(+)</text>
        <dbReference type="Rhea" id="RHEA:46160"/>
        <dbReference type="ChEBI" id="CHEBI:15378"/>
        <dbReference type="ChEBI" id="CHEBI:24646"/>
        <dbReference type="ChEBI" id="CHEBI:57540"/>
        <dbReference type="ChEBI" id="CHEBI:57945"/>
        <dbReference type="ChEBI" id="CHEBI:132124"/>
        <dbReference type="EC" id="1.6.5.2"/>
    </reaction>
</comment>
<comment type="catalytic activity">
    <reaction evidence="1">
        <text>a quinone + NADPH + H(+) = a quinol + NADP(+)</text>
        <dbReference type="Rhea" id="RHEA:46164"/>
        <dbReference type="ChEBI" id="CHEBI:15378"/>
        <dbReference type="ChEBI" id="CHEBI:24646"/>
        <dbReference type="ChEBI" id="CHEBI:57783"/>
        <dbReference type="ChEBI" id="CHEBI:58349"/>
        <dbReference type="ChEBI" id="CHEBI:132124"/>
        <dbReference type="EC" id="1.6.5.2"/>
    </reaction>
</comment>
<comment type="cofactor">
    <cofactor evidence="2">
        <name>FMN</name>
        <dbReference type="ChEBI" id="CHEBI:58210"/>
    </cofactor>
    <text evidence="2">Binds 1 FMN per monomer.</text>
</comment>
<comment type="subunit">
    <text evidence="2">Homotetramer.</text>
</comment>
<comment type="similarity">
    <text evidence="3">Belongs to the WrbA family.</text>
</comment>
<name>NQOR_DEIRA</name>
<sequence length="200" mass="21298">MTAPVKLAIVFYSSTGTGYAMAQEAAEAGRAAGAEVRLLKVRETAPQDVIDGQDAWKANIEAMKDVPEATPADLEWAEAIVFSSPTRFGGATSQMRAFIDTLGGLWSSGKLANKTFSAMTSAQNVNGGQETTLQTLYMTAMHWGAVLTPPGYTDEVIFKSGGNPYGASVTANGQPLLENDRASIRHQVRRQVELTAKLLG</sequence>
<evidence type="ECO:0000250" key="1">
    <source>
        <dbReference type="UniProtKB" id="P0A8G6"/>
    </source>
</evidence>
<evidence type="ECO:0000269" key="2">
    <source>
    </source>
</evidence>
<evidence type="ECO:0000305" key="3"/>
<evidence type="ECO:0007744" key="4">
    <source>
        <dbReference type="PDB" id="1YDG"/>
    </source>
</evidence>
<evidence type="ECO:0007744" key="5">
    <source>
        <dbReference type="PDB" id="1YRH"/>
    </source>
</evidence>
<evidence type="ECO:0007829" key="6">
    <source>
        <dbReference type="PDB" id="1YDG"/>
    </source>
</evidence>
<protein>
    <recommendedName>
        <fullName>NAD(P)H dehydrogenase (quinone)</fullName>
        <ecNumber evidence="1">1.6.5.2</ecNumber>
    </recommendedName>
    <alternativeName>
        <fullName>Flavoprotein WrbA</fullName>
    </alternativeName>
    <alternativeName>
        <fullName>NAD(P)H:quinone oxidoreductase</fullName>
        <shortName>NQO</shortName>
    </alternativeName>
</protein>
<organism>
    <name type="scientific">Deinococcus radiodurans (strain ATCC 13939 / DSM 20539 / JCM 16871 / CCUG 27074 / LMG 4051 / NBRC 15346 / NCIMB 9279 / VKM B-1422 / R1)</name>
    <dbReference type="NCBI Taxonomy" id="243230"/>
    <lineage>
        <taxon>Bacteria</taxon>
        <taxon>Thermotogati</taxon>
        <taxon>Deinococcota</taxon>
        <taxon>Deinococci</taxon>
        <taxon>Deinococcales</taxon>
        <taxon>Deinococcaceae</taxon>
        <taxon>Deinococcus</taxon>
    </lineage>
</organism>
<accession>Q9RYU4</accession>
<reference key="1">
    <citation type="journal article" date="1999" name="Science">
        <title>Genome sequence of the radioresistant bacterium Deinococcus radiodurans R1.</title>
        <authorList>
            <person name="White O."/>
            <person name="Eisen J.A."/>
            <person name="Heidelberg J.F."/>
            <person name="Hickey E.K."/>
            <person name="Peterson J.D."/>
            <person name="Dodson R.J."/>
            <person name="Haft D.H."/>
            <person name="Gwinn M.L."/>
            <person name="Nelson W.C."/>
            <person name="Richardson D.L."/>
            <person name="Moffat K.S."/>
            <person name="Qin H."/>
            <person name="Jiang L."/>
            <person name="Pamphile W."/>
            <person name="Crosby M."/>
            <person name="Shen M."/>
            <person name="Vamathevan J.J."/>
            <person name="Lam P."/>
            <person name="McDonald L.A."/>
            <person name="Utterback T.R."/>
            <person name="Zalewski C."/>
            <person name="Makarova K.S."/>
            <person name="Aravind L."/>
            <person name="Daly M.J."/>
            <person name="Minton K.W."/>
            <person name="Fleischmann R.D."/>
            <person name="Ketchum K.A."/>
            <person name="Nelson K.E."/>
            <person name="Salzberg S.L."/>
            <person name="Smith H.O."/>
            <person name="Venter J.C."/>
            <person name="Fraser C.M."/>
        </authorList>
    </citation>
    <scope>NUCLEOTIDE SEQUENCE [LARGE SCALE GENOMIC DNA]</scope>
    <source>
        <strain>ATCC 13939 / DSM 20539 / JCM 16871 / CCUG 27074 / LMG 4051 / NBRC 15346 / NCIMB 9279 / VKM B-1422 / R1</strain>
    </source>
</reference>
<reference evidence="4 5" key="2">
    <citation type="journal article" date="2005" name="Protein Sci.">
        <title>Crystal structures of the tryptophan repressor binding protein WrbA and complexes with flavin mononucleotide.</title>
        <authorList>
            <person name="Gorman J."/>
            <person name="Shapiro L."/>
        </authorList>
    </citation>
    <scope>X-RAY CRYSTALLOGRAPHY (2.00 ANGSTROMS) OF 2-199 IN COMPLEX WITH FMN</scope>
    <scope>COFACTOR</scope>
    <scope>SUBUNIT</scope>
</reference>